<protein>
    <recommendedName>
        <fullName evidence="1">Small ribosomal subunit protein uS15</fullName>
    </recommendedName>
    <alternativeName>
        <fullName evidence="2">30S ribosomal protein S15</fullName>
    </alternativeName>
</protein>
<evidence type="ECO:0000255" key="1">
    <source>
        <dbReference type="HAMAP-Rule" id="MF_01343"/>
    </source>
</evidence>
<evidence type="ECO:0000305" key="2"/>
<feature type="chain" id="PRO_1000054847" description="Small ribosomal subunit protein uS15">
    <location>
        <begin position="1"/>
        <end position="89"/>
    </location>
</feature>
<proteinExistence type="inferred from homology"/>
<dbReference type="EMBL" id="CP000680">
    <property type="protein sequence ID" value="ABP86353.1"/>
    <property type="molecule type" value="Genomic_DNA"/>
</dbReference>
<dbReference type="SMR" id="A4XYD7"/>
<dbReference type="STRING" id="399739.Pmen_3605"/>
<dbReference type="KEGG" id="pmy:Pmen_3605"/>
<dbReference type="eggNOG" id="COG0184">
    <property type="taxonomic scope" value="Bacteria"/>
</dbReference>
<dbReference type="HOGENOM" id="CLU_148518_0_0_6"/>
<dbReference type="OrthoDB" id="9799262at2"/>
<dbReference type="GO" id="GO:0022627">
    <property type="term" value="C:cytosolic small ribosomal subunit"/>
    <property type="evidence" value="ECO:0007669"/>
    <property type="project" value="TreeGrafter"/>
</dbReference>
<dbReference type="GO" id="GO:0019843">
    <property type="term" value="F:rRNA binding"/>
    <property type="evidence" value="ECO:0007669"/>
    <property type="project" value="UniProtKB-UniRule"/>
</dbReference>
<dbReference type="GO" id="GO:0003735">
    <property type="term" value="F:structural constituent of ribosome"/>
    <property type="evidence" value="ECO:0007669"/>
    <property type="project" value="InterPro"/>
</dbReference>
<dbReference type="GO" id="GO:0006412">
    <property type="term" value="P:translation"/>
    <property type="evidence" value="ECO:0007669"/>
    <property type="project" value="UniProtKB-UniRule"/>
</dbReference>
<dbReference type="CDD" id="cd00353">
    <property type="entry name" value="Ribosomal_S15p_S13e"/>
    <property type="match status" value="1"/>
</dbReference>
<dbReference type="FunFam" id="1.10.287.10:FF:000002">
    <property type="entry name" value="30S ribosomal protein S15"/>
    <property type="match status" value="1"/>
</dbReference>
<dbReference type="Gene3D" id="6.10.250.3130">
    <property type="match status" value="1"/>
</dbReference>
<dbReference type="Gene3D" id="1.10.287.10">
    <property type="entry name" value="S15/NS1, RNA-binding"/>
    <property type="match status" value="1"/>
</dbReference>
<dbReference type="HAMAP" id="MF_01343_B">
    <property type="entry name" value="Ribosomal_uS15_B"/>
    <property type="match status" value="1"/>
</dbReference>
<dbReference type="InterPro" id="IPR000589">
    <property type="entry name" value="Ribosomal_uS15"/>
</dbReference>
<dbReference type="InterPro" id="IPR005290">
    <property type="entry name" value="Ribosomal_uS15_bac-type"/>
</dbReference>
<dbReference type="InterPro" id="IPR009068">
    <property type="entry name" value="uS15_NS1_RNA-bd_sf"/>
</dbReference>
<dbReference type="NCBIfam" id="TIGR00952">
    <property type="entry name" value="S15_bact"/>
    <property type="match status" value="1"/>
</dbReference>
<dbReference type="PANTHER" id="PTHR23321">
    <property type="entry name" value="RIBOSOMAL PROTEIN S15, BACTERIAL AND ORGANELLAR"/>
    <property type="match status" value="1"/>
</dbReference>
<dbReference type="PANTHER" id="PTHR23321:SF26">
    <property type="entry name" value="SMALL RIBOSOMAL SUBUNIT PROTEIN US15M"/>
    <property type="match status" value="1"/>
</dbReference>
<dbReference type="Pfam" id="PF00312">
    <property type="entry name" value="Ribosomal_S15"/>
    <property type="match status" value="1"/>
</dbReference>
<dbReference type="SMART" id="SM01387">
    <property type="entry name" value="Ribosomal_S15"/>
    <property type="match status" value="1"/>
</dbReference>
<dbReference type="SUPFAM" id="SSF47060">
    <property type="entry name" value="S15/NS1 RNA-binding domain"/>
    <property type="match status" value="1"/>
</dbReference>
<dbReference type="PROSITE" id="PS00362">
    <property type="entry name" value="RIBOSOMAL_S15"/>
    <property type="match status" value="1"/>
</dbReference>
<reference key="1">
    <citation type="submission" date="2007-04" db="EMBL/GenBank/DDBJ databases">
        <title>Complete sequence of Pseudomonas mendocina ymp.</title>
        <authorList>
            <consortium name="US DOE Joint Genome Institute"/>
            <person name="Copeland A."/>
            <person name="Lucas S."/>
            <person name="Lapidus A."/>
            <person name="Barry K."/>
            <person name="Glavina del Rio T."/>
            <person name="Dalin E."/>
            <person name="Tice H."/>
            <person name="Pitluck S."/>
            <person name="Kiss H."/>
            <person name="Brettin T."/>
            <person name="Detter J.C."/>
            <person name="Bruce D."/>
            <person name="Han C."/>
            <person name="Schmutz J."/>
            <person name="Larimer F."/>
            <person name="Land M."/>
            <person name="Hauser L."/>
            <person name="Kyrpides N."/>
            <person name="Mikhailova N."/>
            <person name="Hersman L."/>
            <person name="Dubois J."/>
            <person name="Maurice P."/>
            <person name="Richardson P."/>
        </authorList>
    </citation>
    <scope>NUCLEOTIDE SEQUENCE [LARGE SCALE GENOMIC DNA]</scope>
    <source>
        <strain>ymp</strain>
    </source>
</reference>
<accession>A4XYD7</accession>
<gene>
    <name evidence="1" type="primary">rpsO</name>
    <name type="ordered locus">Pmen_3605</name>
</gene>
<sequence length="89" mass="10074">MALSVEEKAQIVNEYKQAEGDTGSPEVQVALLTANINKLQGHFKANGKDHHSRRGLIRMVNQRRKLLDYLKGKDTTRYSALIGRLGLRR</sequence>
<organism>
    <name type="scientific">Ectopseudomonas mendocina (strain ymp)</name>
    <name type="common">Pseudomonas mendocina</name>
    <dbReference type="NCBI Taxonomy" id="399739"/>
    <lineage>
        <taxon>Bacteria</taxon>
        <taxon>Pseudomonadati</taxon>
        <taxon>Pseudomonadota</taxon>
        <taxon>Gammaproteobacteria</taxon>
        <taxon>Pseudomonadales</taxon>
        <taxon>Pseudomonadaceae</taxon>
        <taxon>Ectopseudomonas</taxon>
    </lineage>
</organism>
<comment type="function">
    <text evidence="1">One of the primary rRNA binding proteins, it binds directly to 16S rRNA where it helps nucleate assembly of the platform of the 30S subunit by binding and bridging several RNA helices of the 16S rRNA.</text>
</comment>
<comment type="function">
    <text evidence="1">Forms an intersubunit bridge (bridge B4) with the 23S rRNA of the 50S subunit in the ribosome.</text>
</comment>
<comment type="subunit">
    <text evidence="1">Part of the 30S ribosomal subunit. Forms a bridge to the 50S subunit in the 70S ribosome, contacting the 23S rRNA.</text>
</comment>
<comment type="similarity">
    <text evidence="1">Belongs to the universal ribosomal protein uS15 family.</text>
</comment>
<name>RS15_ECTM1</name>
<keyword id="KW-0687">Ribonucleoprotein</keyword>
<keyword id="KW-0689">Ribosomal protein</keyword>
<keyword id="KW-0694">RNA-binding</keyword>
<keyword id="KW-0699">rRNA-binding</keyword>